<evidence type="ECO:0000255" key="1">
    <source>
        <dbReference type="HAMAP-Rule" id="MF_00689"/>
    </source>
</evidence>
<comment type="function">
    <text evidence="1">Functions in the N-end rule pathway of protein degradation where it conjugates Leu from its aminoacyl-tRNA to the N-termini of proteins containing an N-terminal aspartate or glutamate.</text>
</comment>
<comment type="catalytic activity">
    <reaction evidence="1">
        <text>N-terminal L-glutamyl-[protein] + L-leucyl-tRNA(Leu) = N-terminal L-leucyl-L-glutamyl-[protein] + tRNA(Leu) + H(+)</text>
        <dbReference type="Rhea" id="RHEA:50412"/>
        <dbReference type="Rhea" id="RHEA-COMP:9613"/>
        <dbReference type="Rhea" id="RHEA-COMP:9622"/>
        <dbReference type="Rhea" id="RHEA-COMP:12664"/>
        <dbReference type="Rhea" id="RHEA-COMP:12668"/>
        <dbReference type="ChEBI" id="CHEBI:15378"/>
        <dbReference type="ChEBI" id="CHEBI:64721"/>
        <dbReference type="ChEBI" id="CHEBI:78442"/>
        <dbReference type="ChEBI" id="CHEBI:78494"/>
        <dbReference type="ChEBI" id="CHEBI:133041"/>
        <dbReference type="EC" id="2.3.2.29"/>
    </reaction>
</comment>
<comment type="catalytic activity">
    <reaction evidence="1">
        <text>N-terminal L-aspartyl-[protein] + L-leucyl-tRNA(Leu) = N-terminal L-leucyl-L-aspartyl-[protein] + tRNA(Leu) + H(+)</text>
        <dbReference type="Rhea" id="RHEA:50420"/>
        <dbReference type="Rhea" id="RHEA-COMP:9613"/>
        <dbReference type="Rhea" id="RHEA-COMP:9622"/>
        <dbReference type="Rhea" id="RHEA-COMP:12669"/>
        <dbReference type="Rhea" id="RHEA-COMP:12674"/>
        <dbReference type="ChEBI" id="CHEBI:15378"/>
        <dbReference type="ChEBI" id="CHEBI:64720"/>
        <dbReference type="ChEBI" id="CHEBI:78442"/>
        <dbReference type="ChEBI" id="CHEBI:78494"/>
        <dbReference type="ChEBI" id="CHEBI:133042"/>
        <dbReference type="EC" id="2.3.2.29"/>
    </reaction>
</comment>
<comment type="subcellular location">
    <subcellularLocation>
        <location evidence="1">Cytoplasm</location>
    </subcellularLocation>
</comment>
<comment type="similarity">
    <text evidence="1">Belongs to the R-transferase family. Bpt subfamily.</text>
</comment>
<gene>
    <name evidence="1" type="primary">bpt</name>
    <name type="ordered locus">BR0755</name>
    <name type="ordered locus">BS1330_I0751</name>
</gene>
<name>BPT_BRUSU</name>
<protein>
    <recommendedName>
        <fullName evidence="1">Aspartate/glutamate leucyltransferase</fullName>
        <ecNumber evidence="1">2.3.2.29</ecNumber>
    </recommendedName>
</protein>
<organism>
    <name type="scientific">Brucella suis biovar 1 (strain 1330)</name>
    <dbReference type="NCBI Taxonomy" id="204722"/>
    <lineage>
        <taxon>Bacteria</taxon>
        <taxon>Pseudomonadati</taxon>
        <taxon>Pseudomonadota</taxon>
        <taxon>Alphaproteobacteria</taxon>
        <taxon>Hyphomicrobiales</taxon>
        <taxon>Brucellaceae</taxon>
        <taxon>Brucella/Ochrobactrum group</taxon>
        <taxon>Brucella</taxon>
    </lineage>
</organism>
<reference key="1">
    <citation type="journal article" date="2002" name="Proc. Natl. Acad. Sci. U.S.A.">
        <title>The Brucella suis genome reveals fundamental similarities between animal and plant pathogens and symbionts.</title>
        <authorList>
            <person name="Paulsen I.T."/>
            <person name="Seshadri R."/>
            <person name="Nelson K.E."/>
            <person name="Eisen J.A."/>
            <person name="Heidelberg J.F."/>
            <person name="Read T.D."/>
            <person name="Dodson R.J."/>
            <person name="Umayam L.A."/>
            <person name="Brinkac L.M."/>
            <person name="Beanan M.J."/>
            <person name="Daugherty S.C."/>
            <person name="DeBoy R.T."/>
            <person name="Durkin A.S."/>
            <person name="Kolonay J.F."/>
            <person name="Madupu R."/>
            <person name="Nelson W.C."/>
            <person name="Ayodeji B."/>
            <person name="Kraul M."/>
            <person name="Shetty J."/>
            <person name="Malek J.A."/>
            <person name="Van Aken S.E."/>
            <person name="Riedmuller S."/>
            <person name="Tettelin H."/>
            <person name="Gill S.R."/>
            <person name="White O."/>
            <person name="Salzberg S.L."/>
            <person name="Hoover D.L."/>
            <person name="Lindler L.E."/>
            <person name="Halling S.M."/>
            <person name="Boyle S.M."/>
            <person name="Fraser C.M."/>
        </authorList>
    </citation>
    <scope>NUCLEOTIDE SEQUENCE [LARGE SCALE GENOMIC DNA]</scope>
    <source>
        <strain>1330</strain>
    </source>
</reference>
<reference key="2">
    <citation type="journal article" date="2011" name="J. Bacteriol.">
        <title>Revised genome sequence of Brucella suis 1330.</title>
        <authorList>
            <person name="Tae H."/>
            <person name="Shallom S."/>
            <person name="Settlage R."/>
            <person name="Preston D."/>
            <person name="Adams L.G."/>
            <person name="Garner H.R."/>
        </authorList>
    </citation>
    <scope>NUCLEOTIDE SEQUENCE [LARGE SCALE GENOMIC DNA]</scope>
    <source>
        <strain>1330</strain>
    </source>
</reference>
<sequence>MTHQPQQSPQFFLTAPSPCPYLEGQQERKVFTHLVGDKANEINDLLTQGGFRRSQNIAYRPACEVCRACISVRILAGEFEMTRNMRRVWSQNRDLIGRVHKAQPSTEQYALFRDYLDARHRSGGMSDMTVLDYAMMIEDTHVNTQIIEYRRRGPDSFMSAKGDGELIAVALTDVMADGLSMVYSFFSPHMQERSLGTYMILDHIERARAAGLPHVYLGYWVEGSRKMQYKIRFTPQEHLGPRGWQRFEG</sequence>
<proteinExistence type="inferred from homology"/>
<keyword id="KW-0012">Acyltransferase</keyword>
<keyword id="KW-0963">Cytoplasm</keyword>
<keyword id="KW-0808">Transferase</keyword>
<feature type="chain" id="PRO_0000195100" description="Aspartate/glutamate leucyltransferase">
    <location>
        <begin position="1"/>
        <end position="249"/>
    </location>
</feature>
<dbReference type="EC" id="2.3.2.29" evidence="1"/>
<dbReference type="EMBL" id="AE014291">
    <property type="protein sequence ID" value="AAN29684.1"/>
    <property type="molecule type" value="Genomic_DNA"/>
</dbReference>
<dbReference type="EMBL" id="CP002997">
    <property type="protein sequence ID" value="AEM18101.1"/>
    <property type="molecule type" value="Genomic_DNA"/>
</dbReference>
<dbReference type="RefSeq" id="WP_004683553.1">
    <property type="nucleotide sequence ID" value="NZ_KN046804.1"/>
</dbReference>
<dbReference type="SMR" id="P63647"/>
<dbReference type="KEGG" id="bms:BR0755"/>
<dbReference type="KEGG" id="bsi:BS1330_I0751"/>
<dbReference type="PATRIC" id="fig|204722.21.peg.2635"/>
<dbReference type="HOGENOM" id="CLU_077607_1_0_5"/>
<dbReference type="Proteomes" id="UP000007104">
    <property type="component" value="Chromosome I"/>
</dbReference>
<dbReference type="GO" id="GO:0005737">
    <property type="term" value="C:cytoplasm"/>
    <property type="evidence" value="ECO:0007669"/>
    <property type="project" value="UniProtKB-SubCell"/>
</dbReference>
<dbReference type="GO" id="GO:0004057">
    <property type="term" value="F:arginyl-tRNA--protein transferase activity"/>
    <property type="evidence" value="ECO:0007669"/>
    <property type="project" value="InterPro"/>
</dbReference>
<dbReference type="GO" id="GO:0008914">
    <property type="term" value="F:leucyl-tRNA--protein transferase activity"/>
    <property type="evidence" value="ECO:0007669"/>
    <property type="project" value="UniProtKB-UniRule"/>
</dbReference>
<dbReference type="GO" id="GO:0071596">
    <property type="term" value="P:ubiquitin-dependent protein catabolic process via the N-end rule pathway"/>
    <property type="evidence" value="ECO:0007669"/>
    <property type="project" value="InterPro"/>
</dbReference>
<dbReference type="HAMAP" id="MF_00689">
    <property type="entry name" value="Bpt"/>
    <property type="match status" value="1"/>
</dbReference>
<dbReference type="InterPro" id="IPR016181">
    <property type="entry name" value="Acyl_CoA_acyltransferase"/>
</dbReference>
<dbReference type="InterPro" id="IPR017138">
    <property type="entry name" value="Asp_Glu_LeuTrfase"/>
</dbReference>
<dbReference type="InterPro" id="IPR030700">
    <property type="entry name" value="N-end_Aminoacyl_Trfase"/>
</dbReference>
<dbReference type="InterPro" id="IPR007472">
    <property type="entry name" value="N-end_Aminoacyl_Trfase_C"/>
</dbReference>
<dbReference type="InterPro" id="IPR007471">
    <property type="entry name" value="N-end_Aminoacyl_Trfase_N"/>
</dbReference>
<dbReference type="NCBIfam" id="NF002341">
    <property type="entry name" value="PRK01305.1-1"/>
    <property type="match status" value="1"/>
</dbReference>
<dbReference type="NCBIfam" id="NF002343">
    <property type="entry name" value="PRK01305.1-4"/>
    <property type="match status" value="1"/>
</dbReference>
<dbReference type="NCBIfam" id="NF002346">
    <property type="entry name" value="PRK01305.2-3"/>
    <property type="match status" value="1"/>
</dbReference>
<dbReference type="PANTHER" id="PTHR21367">
    <property type="entry name" value="ARGININE-TRNA-PROTEIN TRANSFERASE 1"/>
    <property type="match status" value="1"/>
</dbReference>
<dbReference type="PANTHER" id="PTHR21367:SF1">
    <property type="entry name" value="ARGINYL-TRNA--PROTEIN TRANSFERASE 1"/>
    <property type="match status" value="1"/>
</dbReference>
<dbReference type="Pfam" id="PF04377">
    <property type="entry name" value="ATE_C"/>
    <property type="match status" value="1"/>
</dbReference>
<dbReference type="Pfam" id="PF04376">
    <property type="entry name" value="ATE_N"/>
    <property type="match status" value="1"/>
</dbReference>
<dbReference type="PIRSF" id="PIRSF037208">
    <property type="entry name" value="ATE_pro_prd"/>
    <property type="match status" value="1"/>
</dbReference>
<dbReference type="SUPFAM" id="SSF55729">
    <property type="entry name" value="Acyl-CoA N-acyltransferases (Nat)"/>
    <property type="match status" value="1"/>
</dbReference>
<accession>P63647</accession>
<accession>G0K8H4</accession>
<accession>Q8G1G1</accession>
<accession>Q8YGG0</accession>